<reference key="1">
    <citation type="journal article" date="2008" name="BMC Genomics">
        <title>Acidithiobacillus ferrooxidans metabolism: from genome sequence to industrial applications.</title>
        <authorList>
            <person name="Valdes J."/>
            <person name="Pedroso I."/>
            <person name="Quatrini R."/>
            <person name="Dodson R.J."/>
            <person name="Tettelin H."/>
            <person name="Blake R. II"/>
            <person name="Eisen J.A."/>
            <person name="Holmes D.S."/>
        </authorList>
    </citation>
    <scope>NUCLEOTIDE SEQUENCE [LARGE SCALE GENOMIC DNA]</scope>
    <source>
        <strain evidence="8">ATCC 23270 / DSM 14882 / CIP 104768 / NCIMB 8455</strain>
    </source>
</reference>
<reference key="2">
    <citation type="journal article" date="2011" name="J. Microbiol. Biotechnol.">
        <title>Ferric reductase activity of the ArsH protein from Acidithiobacillus ferrooxidans.</title>
        <authorList>
            <person name="Mo H."/>
            <person name="Chen Q."/>
            <person name="Du J."/>
            <person name="Tang L."/>
            <person name="Qin F."/>
            <person name="Miao B."/>
            <person name="Wu X."/>
            <person name="Zeng J."/>
        </authorList>
    </citation>
    <scope>FUNCTION</scope>
    <scope>CATALYTIC ACTIVITY</scope>
    <scope>COFACTOR</scope>
    <scope>BIOPHYSICOCHEMICAL PROPERTIES</scope>
    <scope>SUBSTRATE SPECIFICITY</scope>
    <scope>MUTAGENESIS OF GLU-104</scope>
    <scope>3D-STRUCTURE MODELING</scope>
    <source>
        <strain evidence="4">ATCC 23270 / DSM 14882 / CIP 104768 / NCIMB 8455</strain>
    </source>
</reference>
<sequence length="237" mass="26871">MSGNLPNTDDVLLQVPDVRCLRSAAETDHPPRILLLYGSNRECSYSRLLTLEAERLLRYFGAETRVFHPTGLPLPDDAPVTHPKVVELQELVEWSEGQVWCSPERHGAMTGVFKSQVDWIPLNSGAIRPTQGKTLALMQVCGGSQSFNAVNQMRILGRWLRMLTIPNQSSVPKAFLEFDDGGRMKPSAYYDRVVDVMEELMKFTLLTRGNSDYLVDRYSERKESAEELSRRVNLQNL</sequence>
<comment type="function">
    <text evidence="3">Has NADPH-dependent FMN reductase activity and high NADPH-dependent ferric reductase activity with highest activity for Fe(3+) as substrate. No activity with NADH, iron trichloride, Cu(2+) or Ag(+). May be involved in cytosolic ferric iron assimilation as an NADPH-dependent ferric reductase in vivo.</text>
</comment>
<comment type="cofactor">
    <cofactor evidence="3">
        <name>FMN</name>
        <dbReference type="ChEBI" id="CHEBI:58210"/>
    </cofactor>
</comment>
<comment type="biophysicochemical properties">
    <kinetics>
        <KM evidence="3">76 uM for NADPH</KM>
        <KM evidence="3">30 uM for Fe(3+)</KM>
        <Vmax evidence="3">21.6 umol/min/mg enzyme</Vmax>
    </kinetics>
    <phDependence>
        <text evidence="3">Optimum pH is 6.5 for the ferric reductase activity.</text>
    </phDependence>
    <temperatureDependence>
        <text evidence="3">Optimum temperature is 35 degrees Celsius for the ferric reductase activity.</text>
    </temperatureDependence>
</comment>
<comment type="subunit">
    <text evidence="1">Homotetramer.</text>
</comment>
<comment type="similarity">
    <text evidence="5">Belongs to the ArsH family.</text>
</comment>
<proteinExistence type="evidence at protein level"/>
<accession>B7J950</accession>
<evidence type="ECO:0000250" key="1">
    <source>
        <dbReference type="UniProtKB" id="Q92R45"/>
    </source>
</evidence>
<evidence type="ECO:0000250" key="2">
    <source>
        <dbReference type="UniProtKB" id="Q9I4D4"/>
    </source>
</evidence>
<evidence type="ECO:0000269" key="3">
    <source>
    </source>
</evidence>
<evidence type="ECO:0000303" key="4">
    <source>
    </source>
</evidence>
<evidence type="ECO:0000305" key="5"/>
<evidence type="ECO:0000305" key="6">
    <source>
    </source>
</evidence>
<evidence type="ECO:0000312" key="7">
    <source>
        <dbReference type="EMBL" id="ACK78531.1"/>
    </source>
</evidence>
<evidence type="ECO:0000312" key="8">
    <source>
        <dbReference type="Proteomes" id="UP000001362"/>
    </source>
</evidence>
<protein>
    <recommendedName>
        <fullName evidence="4">NADPH-dependent FMN reductase ArsH</fullName>
        <ecNumber evidence="3">1.-.-.-</ecNumber>
    </recommendedName>
    <alternativeName>
        <fullName evidence="5 7">Arsenical resistance operon protein ArsH</fullName>
    </alternativeName>
</protein>
<feature type="chain" id="PRO_0000432219" description="NADPH-dependent FMN reductase ArsH">
    <location>
        <begin position="1"/>
        <end position="237"/>
    </location>
</feature>
<feature type="binding site" evidence="2">
    <location>
        <begin position="39"/>
        <end position="46"/>
    </location>
    <ligand>
        <name>FMN</name>
        <dbReference type="ChEBI" id="CHEBI:58210"/>
    </ligand>
</feature>
<feature type="binding site" evidence="6">
    <location>
        <begin position="102"/>
        <end position="107"/>
    </location>
    <ligand>
        <name>FMN</name>
        <dbReference type="ChEBI" id="CHEBI:58210"/>
    </ligand>
</feature>
<feature type="mutagenesis site" description="Loss of ferric reductase activity. Does not bind FMN cofactor." evidence="3">
    <original>E</original>
    <variation>A</variation>
    <location>
        <position position="104"/>
    </location>
</feature>
<feature type="mutagenesis site" description="Strongly reduced ferric reductase activity. Binds FMN cofactor." evidence="3">
    <original>E</original>
    <variation>D</variation>
    <variation>Q</variation>
    <location>
        <position position="104"/>
    </location>
</feature>
<dbReference type="EC" id="1.-.-.-" evidence="3"/>
<dbReference type="EMBL" id="CP001219">
    <property type="protein sequence ID" value="ACK78531.1"/>
    <property type="molecule type" value="Genomic_DNA"/>
</dbReference>
<dbReference type="RefSeq" id="WP_009566875.1">
    <property type="nucleotide sequence ID" value="NC_011761.1"/>
</dbReference>
<dbReference type="SMR" id="B7J950"/>
<dbReference type="STRING" id="243159.AFE_2857"/>
<dbReference type="PaxDb" id="243159-AFE_2857"/>
<dbReference type="GeneID" id="65281884"/>
<dbReference type="KEGG" id="afr:AFE_2857"/>
<dbReference type="eggNOG" id="COG0431">
    <property type="taxonomic scope" value="Bacteria"/>
</dbReference>
<dbReference type="HOGENOM" id="CLU_055322_0_1_6"/>
<dbReference type="Proteomes" id="UP000001362">
    <property type="component" value="Chromosome"/>
</dbReference>
<dbReference type="GO" id="GO:0052851">
    <property type="term" value="F:ferric-chelate reductase (NADPH) activity"/>
    <property type="evidence" value="ECO:0000314"/>
    <property type="project" value="UniProtKB"/>
</dbReference>
<dbReference type="GO" id="GO:0000293">
    <property type="term" value="F:ferric-chelate reductase activity"/>
    <property type="evidence" value="ECO:0000314"/>
    <property type="project" value="UniProtKB"/>
</dbReference>
<dbReference type="GO" id="GO:0010181">
    <property type="term" value="F:FMN binding"/>
    <property type="evidence" value="ECO:0000250"/>
    <property type="project" value="UniProtKB"/>
</dbReference>
<dbReference type="GO" id="GO:0052873">
    <property type="term" value="F:FMN reductase (NADPH) activity"/>
    <property type="evidence" value="ECO:0000314"/>
    <property type="project" value="UniProtKB"/>
</dbReference>
<dbReference type="GO" id="GO:0016655">
    <property type="term" value="F:oxidoreductase activity, acting on NAD(P)H, quinone or similar compound as acceptor"/>
    <property type="evidence" value="ECO:0007669"/>
    <property type="project" value="TreeGrafter"/>
</dbReference>
<dbReference type="GO" id="GO:0051289">
    <property type="term" value="P:protein homotetramerization"/>
    <property type="evidence" value="ECO:0000250"/>
    <property type="project" value="UniProtKB"/>
</dbReference>
<dbReference type="FunFam" id="3.40.50.360:FF:000027">
    <property type="entry name" value="Arsenical resistance protein ArsH"/>
    <property type="match status" value="1"/>
</dbReference>
<dbReference type="Gene3D" id="3.40.50.360">
    <property type="match status" value="1"/>
</dbReference>
<dbReference type="InterPro" id="IPR014063">
    <property type="entry name" value="Arsenate-R_ArsH"/>
</dbReference>
<dbReference type="InterPro" id="IPR029039">
    <property type="entry name" value="Flavoprotein-like_sf"/>
</dbReference>
<dbReference type="InterPro" id="IPR005025">
    <property type="entry name" value="FMN_Rdtase-like_dom"/>
</dbReference>
<dbReference type="NCBIfam" id="TIGR02690">
    <property type="entry name" value="resist_ArsH"/>
    <property type="match status" value="1"/>
</dbReference>
<dbReference type="PANTHER" id="PTHR43590">
    <property type="entry name" value="ARSENIC RESISTANCE PROTEIN ARSH (AFU_ORTHOLOGUE AFUA_5G15030)"/>
    <property type="match status" value="1"/>
</dbReference>
<dbReference type="PANTHER" id="PTHR43590:SF1">
    <property type="entry name" value="ARSENIC RESISTANCE PROTEIN ARSH (AFU_ORTHOLOGUE AFUA_5G15030)"/>
    <property type="match status" value="1"/>
</dbReference>
<dbReference type="Pfam" id="PF03358">
    <property type="entry name" value="FMN_red"/>
    <property type="match status" value="1"/>
</dbReference>
<dbReference type="SUPFAM" id="SSF52218">
    <property type="entry name" value="Flavoproteins"/>
    <property type="match status" value="1"/>
</dbReference>
<organism>
    <name type="scientific">Acidithiobacillus ferrooxidans (strain ATCC 23270 / DSM 14882 / CIP 104768 / NCIMB 8455)</name>
    <name type="common">Ferrobacillus ferrooxidans (strain ATCC 23270)</name>
    <dbReference type="NCBI Taxonomy" id="243159"/>
    <lineage>
        <taxon>Bacteria</taxon>
        <taxon>Pseudomonadati</taxon>
        <taxon>Pseudomonadota</taxon>
        <taxon>Acidithiobacillia</taxon>
        <taxon>Acidithiobacillales</taxon>
        <taxon>Acidithiobacillaceae</taxon>
        <taxon>Acidithiobacillus</taxon>
    </lineage>
</organism>
<keyword id="KW-0285">Flavoprotein</keyword>
<keyword id="KW-0288">FMN</keyword>
<keyword id="KW-0521">NADP</keyword>
<keyword id="KW-0547">Nucleotide-binding</keyword>
<keyword id="KW-0560">Oxidoreductase</keyword>
<keyword id="KW-1185">Reference proteome</keyword>
<name>ARREH_ACIF2</name>
<gene>
    <name evidence="7" type="primary">arsH</name>
    <name evidence="7" type="ordered locus">AFE_2857</name>
</gene>